<feature type="chain" id="PRO_1000092391" description="Elongation factor 4">
    <location>
        <begin position="1"/>
        <end position="603"/>
    </location>
</feature>
<feature type="domain" description="tr-type G">
    <location>
        <begin position="7"/>
        <end position="189"/>
    </location>
</feature>
<feature type="binding site" evidence="1">
    <location>
        <begin position="19"/>
        <end position="24"/>
    </location>
    <ligand>
        <name>GTP</name>
        <dbReference type="ChEBI" id="CHEBI:37565"/>
    </ligand>
</feature>
<feature type="binding site" evidence="1">
    <location>
        <begin position="136"/>
        <end position="139"/>
    </location>
    <ligand>
        <name>GTP</name>
        <dbReference type="ChEBI" id="CHEBI:37565"/>
    </ligand>
</feature>
<name>LEPA_CROS5</name>
<dbReference type="EC" id="3.6.5.n1" evidence="1"/>
<dbReference type="EMBL" id="CP000806">
    <property type="protein sequence ID" value="ACB54066.1"/>
    <property type="molecule type" value="Genomic_DNA"/>
</dbReference>
<dbReference type="RefSeq" id="WP_009543240.1">
    <property type="nucleotide sequence ID" value="NC_010546.1"/>
</dbReference>
<dbReference type="SMR" id="B1WWD8"/>
<dbReference type="STRING" id="43989.cce_4718"/>
<dbReference type="KEGG" id="cyt:cce_4718"/>
<dbReference type="eggNOG" id="COG0481">
    <property type="taxonomic scope" value="Bacteria"/>
</dbReference>
<dbReference type="HOGENOM" id="CLU_009995_3_3_3"/>
<dbReference type="OrthoDB" id="580826at2"/>
<dbReference type="Proteomes" id="UP000001203">
    <property type="component" value="Chromosome circular"/>
</dbReference>
<dbReference type="GO" id="GO:0005886">
    <property type="term" value="C:plasma membrane"/>
    <property type="evidence" value="ECO:0007669"/>
    <property type="project" value="UniProtKB-SubCell"/>
</dbReference>
<dbReference type="GO" id="GO:0005525">
    <property type="term" value="F:GTP binding"/>
    <property type="evidence" value="ECO:0007669"/>
    <property type="project" value="UniProtKB-KW"/>
</dbReference>
<dbReference type="GO" id="GO:0003924">
    <property type="term" value="F:GTPase activity"/>
    <property type="evidence" value="ECO:0007669"/>
    <property type="project" value="InterPro"/>
</dbReference>
<dbReference type="GO" id="GO:0043022">
    <property type="term" value="F:ribosome binding"/>
    <property type="evidence" value="ECO:0007669"/>
    <property type="project" value="TreeGrafter"/>
</dbReference>
<dbReference type="GO" id="GO:0045727">
    <property type="term" value="P:positive regulation of translation"/>
    <property type="evidence" value="ECO:0007669"/>
    <property type="project" value="TreeGrafter"/>
</dbReference>
<dbReference type="GO" id="GO:0006412">
    <property type="term" value="P:translation"/>
    <property type="evidence" value="ECO:0007669"/>
    <property type="project" value="UniProtKB-KW"/>
</dbReference>
<dbReference type="CDD" id="cd03699">
    <property type="entry name" value="EF4_II"/>
    <property type="match status" value="1"/>
</dbReference>
<dbReference type="CDD" id="cd16260">
    <property type="entry name" value="EF4_III"/>
    <property type="match status" value="1"/>
</dbReference>
<dbReference type="CDD" id="cd01890">
    <property type="entry name" value="LepA"/>
    <property type="match status" value="1"/>
</dbReference>
<dbReference type="CDD" id="cd03709">
    <property type="entry name" value="lepA_C"/>
    <property type="match status" value="1"/>
</dbReference>
<dbReference type="FunFam" id="3.40.50.300:FF:000078">
    <property type="entry name" value="Elongation factor 4"/>
    <property type="match status" value="1"/>
</dbReference>
<dbReference type="FunFam" id="2.40.30.10:FF:000015">
    <property type="entry name" value="Translation factor GUF1, mitochondrial"/>
    <property type="match status" value="1"/>
</dbReference>
<dbReference type="FunFam" id="3.30.70.240:FF:000007">
    <property type="entry name" value="Translation factor GUF1, mitochondrial"/>
    <property type="match status" value="1"/>
</dbReference>
<dbReference type="FunFam" id="3.30.70.2570:FF:000001">
    <property type="entry name" value="Translation factor GUF1, mitochondrial"/>
    <property type="match status" value="1"/>
</dbReference>
<dbReference type="FunFam" id="3.30.70.870:FF:000004">
    <property type="entry name" value="Translation factor GUF1, mitochondrial"/>
    <property type="match status" value="1"/>
</dbReference>
<dbReference type="Gene3D" id="3.30.70.240">
    <property type="match status" value="1"/>
</dbReference>
<dbReference type="Gene3D" id="3.30.70.2570">
    <property type="entry name" value="Elongation factor 4, C-terminal domain"/>
    <property type="match status" value="1"/>
</dbReference>
<dbReference type="Gene3D" id="3.30.70.870">
    <property type="entry name" value="Elongation Factor G (Translational Gtpase), domain 3"/>
    <property type="match status" value="1"/>
</dbReference>
<dbReference type="Gene3D" id="3.40.50.300">
    <property type="entry name" value="P-loop containing nucleotide triphosphate hydrolases"/>
    <property type="match status" value="1"/>
</dbReference>
<dbReference type="Gene3D" id="2.40.30.10">
    <property type="entry name" value="Translation factors"/>
    <property type="match status" value="1"/>
</dbReference>
<dbReference type="HAMAP" id="MF_03138">
    <property type="entry name" value="GUFP"/>
    <property type="match status" value="1"/>
</dbReference>
<dbReference type="HAMAP" id="MF_00071">
    <property type="entry name" value="LepA"/>
    <property type="match status" value="1"/>
</dbReference>
<dbReference type="InterPro" id="IPR006297">
    <property type="entry name" value="EF-4"/>
</dbReference>
<dbReference type="InterPro" id="IPR035647">
    <property type="entry name" value="EFG_III/V"/>
</dbReference>
<dbReference type="InterPro" id="IPR000640">
    <property type="entry name" value="EFG_V-like"/>
</dbReference>
<dbReference type="InterPro" id="IPR004161">
    <property type="entry name" value="EFTu-like_2"/>
</dbReference>
<dbReference type="InterPro" id="IPR031157">
    <property type="entry name" value="G_TR_CS"/>
</dbReference>
<dbReference type="InterPro" id="IPR027518">
    <property type="entry name" value="GUFP"/>
</dbReference>
<dbReference type="InterPro" id="IPR038363">
    <property type="entry name" value="LepA_C_sf"/>
</dbReference>
<dbReference type="InterPro" id="IPR013842">
    <property type="entry name" value="LepA_CTD"/>
</dbReference>
<dbReference type="InterPro" id="IPR035654">
    <property type="entry name" value="LepA_IV"/>
</dbReference>
<dbReference type="InterPro" id="IPR027417">
    <property type="entry name" value="P-loop_NTPase"/>
</dbReference>
<dbReference type="InterPro" id="IPR005225">
    <property type="entry name" value="Small_GTP-bd"/>
</dbReference>
<dbReference type="InterPro" id="IPR000795">
    <property type="entry name" value="T_Tr_GTP-bd_dom"/>
</dbReference>
<dbReference type="NCBIfam" id="TIGR01393">
    <property type="entry name" value="lepA"/>
    <property type="match status" value="1"/>
</dbReference>
<dbReference type="NCBIfam" id="TIGR00231">
    <property type="entry name" value="small_GTP"/>
    <property type="match status" value="1"/>
</dbReference>
<dbReference type="PANTHER" id="PTHR43512:SF4">
    <property type="entry name" value="TRANSLATION FACTOR GUF1 HOMOLOG, CHLOROPLASTIC"/>
    <property type="match status" value="1"/>
</dbReference>
<dbReference type="PANTHER" id="PTHR43512">
    <property type="entry name" value="TRANSLATION FACTOR GUF1-RELATED"/>
    <property type="match status" value="1"/>
</dbReference>
<dbReference type="Pfam" id="PF00679">
    <property type="entry name" value="EFG_C"/>
    <property type="match status" value="1"/>
</dbReference>
<dbReference type="Pfam" id="PF00009">
    <property type="entry name" value="GTP_EFTU"/>
    <property type="match status" value="1"/>
</dbReference>
<dbReference type="Pfam" id="PF03144">
    <property type="entry name" value="GTP_EFTU_D2"/>
    <property type="match status" value="1"/>
</dbReference>
<dbReference type="Pfam" id="PF06421">
    <property type="entry name" value="LepA_C"/>
    <property type="match status" value="1"/>
</dbReference>
<dbReference type="PRINTS" id="PR00315">
    <property type="entry name" value="ELONGATNFCT"/>
</dbReference>
<dbReference type="SUPFAM" id="SSF54980">
    <property type="entry name" value="EF-G C-terminal domain-like"/>
    <property type="match status" value="2"/>
</dbReference>
<dbReference type="SUPFAM" id="SSF52540">
    <property type="entry name" value="P-loop containing nucleoside triphosphate hydrolases"/>
    <property type="match status" value="1"/>
</dbReference>
<dbReference type="PROSITE" id="PS00301">
    <property type="entry name" value="G_TR_1"/>
    <property type="match status" value="1"/>
</dbReference>
<dbReference type="PROSITE" id="PS51722">
    <property type="entry name" value="G_TR_2"/>
    <property type="match status" value="1"/>
</dbReference>
<organism>
    <name type="scientific">Crocosphaera subtropica (strain ATCC 51142 / BH68)</name>
    <name type="common">Cyanothece sp. (strain ATCC 51142)</name>
    <dbReference type="NCBI Taxonomy" id="43989"/>
    <lineage>
        <taxon>Bacteria</taxon>
        <taxon>Bacillati</taxon>
        <taxon>Cyanobacteriota</taxon>
        <taxon>Cyanophyceae</taxon>
        <taxon>Oscillatoriophycideae</taxon>
        <taxon>Chroococcales</taxon>
        <taxon>Aphanothecaceae</taxon>
        <taxon>Crocosphaera</taxon>
        <taxon>Crocosphaera subtropica</taxon>
    </lineage>
</organism>
<keyword id="KW-0997">Cell inner membrane</keyword>
<keyword id="KW-1003">Cell membrane</keyword>
<keyword id="KW-0342">GTP-binding</keyword>
<keyword id="KW-0378">Hydrolase</keyword>
<keyword id="KW-0472">Membrane</keyword>
<keyword id="KW-0547">Nucleotide-binding</keyword>
<keyword id="KW-0648">Protein biosynthesis</keyword>
<keyword id="KW-1185">Reference proteome</keyword>
<protein>
    <recommendedName>
        <fullName evidence="1">Elongation factor 4</fullName>
        <shortName evidence="1">EF-4</shortName>
        <ecNumber evidence="1">3.6.5.n1</ecNumber>
    </recommendedName>
    <alternativeName>
        <fullName evidence="1">Ribosomal back-translocase LepA</fullName>
    </alternativeName>
</protein>
<comment type="function">
    <text evidence="1">Required for accurate and efficient protein synthesis under certain stress conditions. May act as a fidelity factor of the translation reaction, by catalyzing a one-codon backward translocation of tRNAs on improperly translocated ribosomes. Back-translocation proceeds from a post-translocation (POST) complex to a pre-translocation (PRE) complex, thus giving elongation factor G a second chance to translocate the tRNAs correctly. Binds to ribosomes in a GTP-dependent manner.</text>
</comment>
<comment type="catalytic activity">
    <reaction evidence="1">
        <text>GTP + H2O = GDP + phosphate + H(+)</text>
        <dbReference type="Rhea" id="RHEA:19669"/>
        <dbReference type="ChEBI" id="CHEBI:15377"/>
        <dbReference type="ChEBI" id="CHEBI:15378"/>
        <dbReference type="ChEBI" id="CHEBI:37565"/>
        <dbReference type="ChEBI" id="CHEBI:43474"/>
        <dbReference type="ChEBI" id="CHEBI:58189"/>
        <dbReference type="EC" id="3.6.5.n1"/>
    </reaction>
</comment>
<comment type="subcellular location">
    <subcellularLocation>
        <location evidence="1">Cell inner membrane</location>
        <topology evidence="1">Peripheral membrane protein</topology>
        <orientation evidence="1">Cytoplasmic side</orientation>
    </subcellularLocation>
</comment>
<comment type="similarity">
    <text evidence="1">Belongs to the TRAFAC class translation factor GTPase superfamily. Classic translation factor GTPase family. LepA subfamily.</text>
</comment>
<gene>
    <name evidence="1" type="primary">lepA</name>
    <name type="ordered locus">cce_4718</name>
</gene>
<proteinExistence type="inferred from homology"/>
<evidence type="ECO:0000255" key="1">
    <source>
        <dbReference type="HAMAP-Rule" id="MF_00071"/>
    </source>
</evidence>
<accession>B1WWD8</accession>
<reference key="1">
    <citation type="journal article" date="2008" name="Proc. Natl. Acad. Sci. U.S.A.">
        <title>The genome of Cyanothece 51142, a unicellular diazotrophic cyanobacterium important in the marine nitrogen cycle.</title>
        <authorList>
            <person name="Welsh E.A."/>
            <person name="Liberton M."/>
            <person name="Stoeckel J."/>
            <person name="Loh T."/>
            <person name="Elvitigala T."/>
            <person name="Wang C."/>
            <person name="Wollam A."/>
            <person name="Fulton R.S."/>
            <person name="Clifton S.W."/>
            <person name="Jacobs J.M."/>
            <person name="Aurora R."/>
            <person name="Ghosh B.K."/>
            <person name="Sherman L.A."/>
            <person name="Smith R.D."/>
            <person name="Wilson R.K."/>
            <person name="Pakrasi H.B."/>
        </authorList>
    </citation>
    <scope>NUCLEOTIDE SEQUENCE [LARGE SCALE GENOMIC DNA]</scope>
    <source>
        <strain>ATCC 51142 / BH68</strain>
    </source>
</reference>
<sequence>MTDVPVSRIRNFCIIAHIDHGKSTLADRMLQMTETVAQRKMKEQFLDNMDLERERGITIKLQAARMNYRSKDGEDYVLNLIDTPGHVDFSYEVSRSLAACEGALLVVDSSQGVEAQTLANVYLALENNLEIIPILNKIDLPGSEPERVANEIEEVVGLDCTGIIKASAKAGIGVDEILESIVHLVPPPSDTVDKPLRALIFDSYYDPYRGVIVYFRVMDGTVKTGDRVRLMASGKEYEIDELGVLSPNQIEVESLHAGEVGYFAAAIKAVEDARVGDTITLAEAPAKEPLPGYTEAKPMVFCGLFPTDADQYEDLREALNRLKLNDAALSYEPETSSAMGFGFRCGFLGLLHMEIVQERLEREYDLDLITTAPSVIYRVTTIDGEVIQVDNPSLLPSPQEREKVEEPYIEVEMITPETYVGTLMELCQSRRGVFKDMRYFTLSRTSLVYELPLAEVVTDFFDQLKSRSRGYASMEYQLIGYRENPLVKLDILVNGDSVDALAMIVHRDKAYYVGRALTEKLKELIPRHQFKVPIQAAIGSKVIASEHIPALRKDVLAKCYGGDISRKKKLLQKQAKGKKRMKAIGTVDVPQEAFMAVLKLDPQ</sequence>